<feature type="chain" id="PRO_0000064257" description="Vinculin">
    <location>
        <begin position="1"/>
        <end position="993"/>
    </location>
</feature>
<feature type="repeat" description="1" evidence="3">
    <location>
        <begin position="258"/>
        <end position="364"/>
    </location>
</feature>
<feature type="repeat" description="2" evidence="3">
    <location>
        <begin position="373"/>
        <end position="480"/>
    </location>
</feature>
<feature type="region of interest" description="2 X repeats" evidence="3">
    <location>
        <begin position="258"/>
        <end position="480"/>
    </location>
</feature>
<feature type="region of interest" description="Disordered" evidence="4">
    <location>
        <begin position="730"/>
        <end position="797"/>
    </location>
</feature>
<feature type="compositionally biased region" description="Basic and acidic residues" evidence="4">
    <location>
        <begin position="758"/>
        <end position="768"/>
    </location>
</feature>
<feature type="compositionally biased region" description="Pro residues" evidence="4">
    <location>
        <begin position="769"/>
        <end position="790"/>
    </location>
</feature>
<keyword id="KW-0009">Actin-binding</keyword>
<keyword id="KW-0130">Cell adhesion</keyword>
<keyword id="KW-0965">Cell junction</keyword>
<keyword id="KW-1003">Cell membrane</keyword>
<keyword id="KW-0963">Cytoplasm</keyword>
<keyword id="KW-0206">Cytoskeleton</keyword>
<keyword id="KW-0472">Membrane</keyword>
<keyword id="KW-1185">Reference proteome</keyword>
<keyword id="KW-0677">Repeat</keyword>
<organism>
    <name type="scientific">Brugia malayi</name>
    <name type="common">Filarial nematode worm</name>
    <dbReference type="NCBI Taxonomy" id="6279"/>
    <lineage>
        <taxon>Eukaryota</taxon>
        <taxon>Metazoa</taxon>
        <taxon>Ecdysozoa</taxon>
        <taxon>Nematoda</taxon>
        <taxon>Chromadorea</taxon>
        <taxon>Rhabditida</taxon>
        <taxon>Spirurina</taxon>
        <taxon>Spiruromorpha</taxon>
        <taxon>Filarioidea</taxon>
        <taxon>Onchocercidae</taxon>
        <taxon>Brugia</taxon>
    </lineage>
</organism>
<dbReference type="EMBL" id="U07023">
    <property type="protein sequence ID" value="AAB96842.1"/>
    <property type="molecule type" value="mRNA"/>
</dbReference>
<dbReference type="SMR" id="Q17162"/>
<dbReference type="FunCoup" id="Q17162">
    <property type="interactions" value="969"/>
</dbReference>
<dbReference type="STRING" id="6279.Q17162"/>
<dbReference type="WormBase" id="Bm7396a">
    <property type="protein sequence ID" value="BM25936"/>
    <property type="gene ID" value="WBGene00227657"/>
    <property type="gene designation" value="Bma-deb-1"/>
</dbReference>
<dbReference type="InParanoid" id="Q17162"/>
<dbReference type="Proteomes" id="UP000006672">
    <property type="component" value="Unassembled WGS sequence"/>
</dbReference>
<dbReference type="GO" id="GO:0005912">
    <property type="term" value="C:adherens junction"/>
    <property type="evidence" value="ECO:0007669"/>
    <property type="project" value="UniProtKB-SubCell"/>
</dbReference>
<dbReference type="GO" id="GO:0005737">
    <property type="term" value="C:cytoplasm"/>
    <property type="evidence" value="ECO:0007669"/>
    <property type="project" value="UniProtKB-KW"/>
</dbReference>
<dbReference type="GO" id="GO:0005856">
    <property type="term" value="C:cytoskeleton"/>
    <property type="evidence" value="ECO:0007669"/>
    <property type="project" value="UniProtKB-SubCell"/>
</dbReference>
<dbReference type="GO" id="GO:0005886">
    <property type="term" value="C:plasma membrane"/>
    <property type="evidence" value="ECO:0007669"/>
    <property type="project" value="UniProtKB-SubCell"/>
</dbReference>
<dbReference type="GO" id="GO:0051015">
    <property type="term" value="F:actin filament binding"/>
    <property type="evidence" value="ECO:0007669"/>
    <property type="project" value="InterPro"/>
</dbReference>
<dbReference type="GO" id="GO:0007155">
    <property type="term" value="P:cell adhesion"/>
    <property type="evidence" value="ECO:0007669"/>
    <property type="project" value="UniProtKB-KW"/>
</dbReference>
<dbReference type="FunFam" id="1.20.120.230:FF:000010">
    <property type="entry name" value="Vinculin a"/>
    <property type="match status" value="1"/>
</dbReference>
<dbReference type="Gene3D" id="1.20.120.230">
    <property type="entry name" value="Alpha-catenin/vinculin-like"/>
    <property type="match status" value="4"/>
</dbReference>
<dbReference type="Gene3D" id="1.20.120.810">
    <property type="entry name" value="Vinculin, Vh2 four-helix bundle"/>
    <property type="match status" value="2"/>
</dbReference>
<dbReference type="InterPro" id="IPR036723">
    <property type="entry name" value="Alpha-catenin/vinculin-like_sf"/>
</dbReference>
<dbReference type="InterPro" id="IPR017997">
    <property type="entry name" value="Vinculin"/>
</dbReference>
<dbReference type="InterPro" id="IPR006077">
    <property type="entry name" value="Vinculin/catenin"/>
</dbReference>
<dbReference type="PANTHER" id="PTHR46180">
    <property type="entry name" value="VINCULIN"/>
    <property type="match status" value="1"/>
</dbReference>
<dbReference type="Pfam" id="PF01044">
    <property type="entry name" value="Vinculin"/>
    <property type="match status" value="1"/>
</dbReference>
<dbReference type="PRINTS" id="PR00806">
    <property type="entry name" value="VINCULIN"/>
</dbReference>
<dbReference type="SUPFAM" id="SSF47220">
    <property type="entry name" value="alpha-catenin/vinculin-like"/>
    <property type="match status" value="6"/>
</dbReference>
<proteinExistence type="evidence at transcript level"/>
<sequence length="993" mass="110188">MPVFHTKTIEGILEPVAQQVSRLVILHEEAEDGNAVLDLTLPVGAVSRAVDNLIKVGYDTCHSSDDRILQADMPPALQRVEASSRLLEDACHMLRADPYSSVARKKLIEGARGILQGTSALLLSFDESEVRKIIRGCRKVLDYLAVAEVIESMDDLAQFVKDISPWLTRVSRNIDAREKELTHQVHREILLRCMDTVKTLSPIMICAMKIFIQITEESQRGQQEAAENRNYLAQRMTDEMNEIIRVLQLTTYDEDEWDSDNVTVMRKALSAAQSLLTSALDWLADSRGRAGATGEKAIRRIVDYSERIAARALPEDARLIRATVSDITSMTDSLCELRNQGGDSQGLASGCANRLKELVGTKEISGILPSALTNTQRTGGTHPAHTVTGRLEQALRWMDNPGVDDNGLGLQAVKAMTSEAGNLQPIYSHLQNVRKFVDLCVEIDRQADQLADLEHRGLGNPPAAHAIRNQLRNKLRELVDIMKKVITDRVVEDFADISTPLKQFVDAVYASPTIVNRELSFEEKAHNLDDHSSRCANTALLVAKCGPCKNKKTVEAIIEAANQVNAMTPQVIKAGKIRLHNDSDSANLHFDNLRREYSDVLNRLRSHVDDAIDTSDFIRASEQAMRQYTVYCENAIRNNEPQQMVDNTSQIARFGNRVLMTAKNEADNSEEPSFVHRVNNAARRLHSAIPPMVNQAKQVALNPRHGGNAQSWRDANEHLLSAVRQVGDAITGAGGSRPPSQNLLVESVPPKAPTSPIVHDRIYIREDIPTPPRPPPPVEISPPPRPPPPPETDDEEETRAFWERYPLLGASSQPILSAAHNLHQELRQWSSHENEIVAAAKRMAILMARLSQLVRGEGGTKKDLVDCAKAIADSSEEVTRLAVQLARQCTVIKMRMTLLQVCERIPTIATQLKILSTVKATMLGSQATIGPYGQPIDGSEEDEEAMQQLVLNAQNLMQSVKDTVRAAEAASIKIRTNSGLRLRWIRKPMWSNF</sequence>
<comment type="function">
    <text evidence="1">Involved in cell adhesion. May be involved in the attachment of the actin-based microfilaments to the plasma membrane.</text>
</comment>
<comment type="subunit">
    <text evidence="1">Exhibits self-association properties.</text>
</comment>
<comment type="subcellular location">
    <subcellularLocation>
        <location evidence="2">Cytoplasm</location>
        <location evidence="2">Cytoskeleton</location>
    </subcellularLocation>
    <subcellularLocation>
        <location evidence="1">Cell junction</location>
        <location evidence="1">Adherens junction</location>
    </subcellularLocation>
    <subcellularLocation>
        <location evidence="1">Cell membrane</location>
        <topology evidence="1">Peripheral membrane protein</topology>
        <orientation evidence="1">Cytoplasmic side</orientation>
    </subcellularLocation>
    <subcellularLocation>
        <location evidence="1">Cell junction</location>
    </subcellularLocation>
    <text evidence="1">Cytoplasmic face of adhesion plaques.</text>
</comment>
<comment type="similarity">
    <text evidence="5">Belongs to the vinculin/alpha-catenin family.</text>
</comment>
<name>VINC_BRUMA</name>
<evidence type="ECO:0000250" key="1">
    <source>
        <dbReference type="UniProtKB" id="P12003"/>
    </source>
</evidence>
<evidence type="ECO:0000250" key="2">
    <source>
        <dbReference type="UniProtKB" id="P85972"/>
    </source>
</evidence>
<evidence type="ECO:0000255" key="3"/>
<evidence type="ECO:0000256" key="4">
    <source>
        <dbReference type="SAM" id="MobiDB-lite"/>
    </source>
</evidence>
<evidence type="ECO:0000305" key="5"/>
<protein>
    <recommendedName>
        <fullName>Vinculin</fullName>
    </recommendedName>
</protein>
<accession>Q17162</accession>
<reference key="1">
    <citation type="submission" date="1994-02" db="EMBL/GenBank/DDBJ databases">
        <authorList>
            <person name="Dissanayake S."/>
        </authorList>
    </citation>
    <scope>NUCLEOTIDE SEQUENCE [MRNA]</scope>
</reference>